<sequence>MDSDSCAAAFHPEEYSPSCKRRRTVEDFNKFCTFVLAYAGYIPYPKEELPLRSSPSPANSTAGTIDSDGWDAGFSDIASSVPLPVSDRCFSHLQPTLLQRAKPSNFLLDRKKTDKLKKKKKRKRRDSDAPGKEGYRGGLLKLEAADPYVETPTSPTLQDIPQAPSDPCSGWDSDTPSSGSCATVSPDQVKEIKTEGKRTIVRQGKQVVFRDEDSTGNDEDIMVDSDDDSWDLVTCFCMKPFAGRPMIECNECHTWIHLSCAKIRKSNVPEVFVCQKCRDSKFDIRRSNRSRTGSRKLFLD</sequence>
<accession>Q86YI8</accession>
<accession>B3KUQ7</accession>
<accession>Q59FB6</accession>
<accession>Q5TH65</accession>
<accession>Q8N551</accession>
<accession>Q9UJP2</accession>
<feature type="chain" id="PRO_0000059304" description="PHD finger protein 13">
    <location>
        <begin position="1"/>
        <end position="300"/>
    </location>
</feature>
<feature type="zinc finger region" description="PHD-type">
    <location>
        <begin position="232"/>
        <end position="280"/>
    </location>
</feature>
<feature type="region of interest" description="Disordered" evidence="2">
    <location>
        <begin position="109"/>
        <end position="185"/>
    </location>
</feature>
<feature type="region of interest" description="Interaction with trimethylated histone H3 (H3K4)" evidence="6 9">
    <location>
        <begin position="241"/>
        <end position="248"/>
    </location>
</feature>
<feature type="short sequence motif" description="Nuclear localization signal" evidence="7">
    <location>
        <begin position="110"/>
        <end position="127"/>
    </location>
</feature>
<feature type="compositionally biased region" description="Basic residues" evidence="2">
    <location>
        <begin position="113"/>
        <end position="124"/>
    </location>
</feature>
<feature type="compositionally biased region" description="Basic and acidic residues" evidence="2">
    <location>
        <begin position="125"/>
        <end position="135"/>
    </location>
</feature>
<feature type="compositionally biased region" description="Polar residues" evidence="2">
    <location>
        <begin position="172"/>
        <end position="185"/>
    </location>
</feature>
<feature type="sequence variant" id="VAR_055285" description="In dbSNP:rs17853850." evidence="3">
    <original>K</original>
    <variation>E</variation>
    <location>
        <position position="20"/>
    </location>
</feature>
<feature type="sequence conflict" description="In Ref. 1; BAG53519." evidence="7" ref="1">
    <original>K</original>
    <variation>R</variation>
    <location>
        <position position="111"/>
    </location>
</feature>
<feature type="strand" evidence="10">
    <location>
        <begin position="246"/>
        <end position="248"/>
    </location>
</feature>
<feature type="turn" evidence="10">
    <location>
        <begin position="250"/>
        <end position="252"/>
    </location>
</feature>
<feature type="strand" evidence="10">
    <location>
        <begin position="255"/>
        <end position="257"/>
    </location>
</feature>
<feature type="turn" evidence="10">
    <location>
        <begin position="258"/>
        <end position="262"/>
    </location>
</feature>
<feature type="helix" evidence="10">
    <location>
        <begin position="265"/>
        <end position="267"/>
    </location>
</feature>
<feature type="helix" evidence="10">
    <location>
        <begin position="275"/>
        <end position="278"/>
    </location>
</feature>
<keyword id="KW-0002">3D-structure</keyword>
<keyword id="KW-0131">Cell cycle</keyword>
<keyword id="KW-0132">Cell division</keyword>
<keyword id="KW-0156">Chromatin regulator</keyword>
<keyword id="KW-0226">DNA condensation</keyword>
<keyword id="KW-0479">Metal-binding</keyword>
<keyword id="KW-0498">Mitosis</keyword>
<keyword id="KW-0539">Nucleus</keyword>
<keyword id="KW-1267">Proteomics identification</keyword>
<keyword id="KW-1185">Reference proteome</keyword>
<keyword id="KW-0862">Zinc</keyword>
<keyword id="KW-0863">Zinc-finger</keyword>
<gene>
    <name evidence="8" type="primary">PHF13</name>
</gene>
<dbReference type="EMBL" id="AK315110">
    <property type="protein sequence ID" value="BAG37568.1"/>
    <property type="molecule type" value="mRNA"/>
</dbReference>
<dbReference type="EMBL" id="AK097715">
    <property type="protein sequence ID" value="BAG53519.1"/>
    <property type="molecule type" value="mRNA"/>
</dbReference>
<dbReference type="EMBL" id="AB209544">
    <property type="protein sequence ID" value="BAD92781.1"/>
    <property type="status" value="ALT_INIT"/>
    <property type="molecule type" value="mRNA"/>
</dbReference>
<dbReference type="EMBL" id="AL031447">
    <property type="status" value="NOT_ANNOTATED_CDS"/>
    <property type="molecule type" value="Genomic_DNA"/>
</dbReference>
<dbReference type="EMBL" id="CH471130">
    <property type="protein sequence ID" value="EAW71561.1"/>
    <property type="molecule type" value="Genomic_DNA"/>
</dbReference>
<dbReference type="EMBL" id="BC032792">
    <property type="protein sequence ID" value="AAH32792.2"/>
    <property type="status" value="ALT_INIT"/>
    <property type="molecule type" value="mRNA"/>
</dbReference>
<dbReference type="EMBL" id="BC038516">
    <property type="protein sequence ID" value="AAH38516.1"/>
    <property type="molecule type" value="mRNA"/>
</dbReference>
<dbReference type="EMBL" id="AL121733">
    <property type="protein sequence ID" value="CAB57324.1"/>
    <property type="molecule type" value="mRNA"/>
</dbReference>
<dbReference type="CCDS" id="CCDS85.1"/>
<dbReference type="RefSeq" id="NP_722519.2">
    <property type="nucleotide sequence ID" value="NM_153812.3"/>
</dbReference>
<dbReference type="PDB" id="3O70">
    <property type="method" value="X-ray"/>
    <property type="resolution" value="1.85 A"/>
    <property type="chains" value="A=232-281"/>
</dbReference>
<dbReference type="PDB" id="3O7A">
    <property type="method" value="X-ray"/>
    <property type="resolution" value="1.67 A"/>
    <property type="chains" value="A=229-280"/>
</dbReference>
<dbReference type="PDBsum" id="3O70"/>
<dbReference type="PDBsum" id="3O7A"/>
<dbReference type="SMR" id="Q86YI8"/>
<dbReference type="BioGRID" id="127151">
    <property type="interactions" value="15"/>
</dbReference>
<dbReference type="FunCoup" id="Q86YI8">
    <property type="interactions" value="1945"/>
</dbReference>
<dbReference type="IntAct" id="Q86YI8">
    <property type="interactions" value="7"/>
</dbReference>
<dbReference type="MINT" id="Q86YI8"/>
<dbReference type="STRING" id="9606.ENSP00000366876"/>
<dbReference type="BindingDB" id="Q86YI8"/>
<dbReference type="ChEMBL" id="CHEMBL1764945"/>
<dbReference type="iPTMnet" id="Q86YI8"/>
<dbReference type="PhosphoSitePlus" id="Q86YI8"/>
<dbReference type="BioMuta" id="PHF13"/>
<dbReference type="DMDM" id="229462750"/>
<dbReference type="jPOST" id="Q86YI8"/>
<dbReference type="MassIVE" id="Q86YI8"/>
<dbReference type="PaxDb" id="9606-ENSP00000366876"/>
<dbReference type="PeptideAtlas" id="Q86YI8"/>
<dbReference type="ProteomicsDB" id="70418"/>
<dbReference type="Antibodypedia" id="13124">
    <property type="antibodies" value="135 antibodies from 19 providers"/>
</dbReference>
<dbReference type="DNASU" id="148479"/>
<dbReference type="Ensembl" id="ENST00000377648.5">
    <property type="protein sequence ID" value="ENSP00000366876.4"/>
    <property type="gene ID" value="ENSG00000116273.6"/>
</dbReference>
<dbReference type="GeneID" id="148479"/>
<dbReference type="KEGG" id="hsa:148479"/>
<dbReference type="MANE-Select" id="ENST00000377648.5">
    <property type="protein sequence ID" value="ENSP00000366876.4"/>
    <property type="RefSeq nucleotide sequence ID" value="NM_153812.3"/>
    <property type="RefSeq protein sequence ID" value="NP_722519.2"/>
</dbReference>
<dbReference type="UCSC" id="uc001aob.5">
    <property type="organism name" value="human"/>
</dbReference>
<dbReference type="AGR" id="HGNC:22983"/>
<dbReference type="CTD" id="148479"/>
<dbReference type="DisGeNET" id="148479"/>
<dbReference type="GeneCards" id="PHF13"/>
<dbReference type="HGNC" id="HGNC:22983">
    <property type="gene designation" value="PHF13"/>
</dbReference>
<dbReference type="HPA" id="ENSG00000116273">
    <property type="expression patterns" value="Low tissue specificity"/>
</dbReference>
<dbReference type="MIM" id="620054">
    <property type="type" value="gene"/>
</dbReference>
<dbReference type="neXtProt" id="NX_Q86YI8"/>
<dbReference type="OpenTargets" id="ENSG00000116273"/>
<dbReference type="PharmGKB" id="PA134901883"/>
<dbReference type="VEuPathDB" id="HostDB:ENSG00000116273"/>
<dbReference type="eggNOG" id="KOG1844">
    <property type="taxonomic scope" value="Eukaryota"/>
</dbReference>
<dbReference type="GeneTree" id="ENSGT00530000063882"/>
<dbReference type="HOGENOM" id="CLU_047981_0_0_1"/>
<dbReference type="InParanoid" id="Q86YI8"/>
<dbReference type="OMA" id="IPLHPQC"/>
<dbReference type="OrthoDB" id="79252at2759"/>
<dbReference type="PAN-GO" id="Q86YI8">
    <property type="GO annotations" value="3 GO annotations based on evolutionary models"/>
</dbReference>
<dbReference type="PhylomeDB" id="Q86YI8"/>
<dbReference type="TreeFam" id="TF331373"/>
<dbReference type="PathwayCommons" id="Q86YI8"/>
<dbReference type="SignaLink" id="Q86YI8"/>
<dbReference type="BioGRID-ORCS" id="148479">
    <property type="hits" value="24 hits in 1162 CRISPR screens"/>
</dbReference>
<dbReference type="ChiTaRS" id="PHF13">
    <property type="organism name" value="human"/>
</dbReference>
<dbReference type="EvolutionaryTrace" id="Q86YI8"/>
<dbReference type="GenomeRNAi" id="148479"/>
<dbReference type="Pharos" id="Q86YI8">
    <property type="development level" value="Tbio"/>
</dbReference>
<dbReference type="PRO" id="PR:Q86YI8"/>
<dbReference type="Proteomes" id="UP000005640">
    <property type="component" value="Chromosome 1"/>
</dbReference>
<dbReference type="RNAct" id="Q86YI8">
    <property type="molecule type" value="protein"/>
</dbReference>
<dbReference type="Bgee" id="ENSG00000116273">
    <property type="expression patterns" value="Expressed in secondary oocyte and 192 other cell types or tissues"/>
</dbReference>
<dbReference type="ExpressionAtlas" id="Q86YI8">
    <property type="expression patterns" value="baseline and differential"/>
</dbReference>
<dbReference type="GO" id="GO:0005654">
    <property type="term" value="C:nucleoplasm"/>
    <property type="evidence" value="ECO:0007669"/>
    <property type="project" value="UniProtKB-SubCell"/>
</dbReference>
<dbReference type="GO" id="GO:0005634">
    <property type="term" value="C:nucleus"/>
    <property type="evidence" value="ECO:0000314"/>
    <property type="project" value="UniProtKB"/>
</dbReference>
<dbReference type="GO" id="GO:0003682">
    <property type="term" value="F:chromatin binding"/>
    <property type="evidence" value="ECO:0000314"/>
    <property type="project" value="UniProtKB"/>
</dbReference>
<dbReference type="GO" id="GO:0140463">
    <property type="term" value="F:chromatin-protein adaptor activity"/>
    <property type="evidence" value="ECO:0000314"/>
    <property type="project" value="UniProtKB"/>
</dbReference>
<dbReference type="GO" id="GO:0062072">
    <property type="term" value="F:histone H3K9me2/3 reader activity"/>
    <property type="evidence" value="ECO:0000314"/>
    <property type="project" value="UniProtKB"/>
</dbReference>
<dbReference type="GO" id="GO:0035064">
    <property type="term" value="F:methylated histone binding"/>
    <property type="evidence" value="ECO:0000303"/>
    <property type="project" value="UniProtKB"/>
</dbReference>
<dbReference type="GO" id="GO:0008270">
    <property type="term" value="F:zinc ion binding"/>
    <property type="evidence" value="ECO:0007669"/>
    <property type="project" value="UniProtKB-KW"/>
</dbReference>
<dbReference type="GO" id="GO:0051301">
    <property type="term" value="P:cell division"/>
    <property type="evidence" value="ECO:0007669"/>
    <property type="project" value="UniProtKB-KW"/>
</dbReference>
<dbReference type="GO" id="GO:0007059">
    <property type="term" value="P:chromosome segregation"/>
    <property type="evidence" value="ECO:0000315"/>
    <property type="project" value="UniProtKB"/>
</dbReference>
<dbReference type="GO" id="GO:0006974">
    <property type="term" value="P:DNA damage response"/>
    <property type="evidence" value="ECO:0000314"/>
    <property type="project" value="UniProtKB"/>
</dbReference>
<dbReference type="GO" id="GO:0000278">
    <property type="term" value="P:mitotic cell cycle"/>
    <property type="evidence" value="ECO:0000315"/>
    <property type="project" value="UniProtKB"/>
</dbReference>
<dbReference type="GO" id="GO:0007076">
    <property type="term" value="P:mitotic chromosome condensation"/>
    <property type="evidence" value="ECO:0000315"/>
    <property type="project" value="UniProtKB"/>
</dbReference>
<dbReference type="CDD" id="cd15632">
    <property type="entry name" value="PHD_PHF13"/>
    <property type="match status" value="1"/>
</dbReference>
<dbReference type="FunFam" id="3.30.40.10:FF:000039">
    <property type="entry name" value="PHD finger protein 13"/>
    <property type="match status" value="1"/>
</dbReference>
<dbReference type="Gene3D" id="3.30.40.10">
    <property type="entry name" value="Zinc/RING finger domain, C3HC4 (zinc finger)"/>
    <property type="match status" value="1"/>
</dbReference>
<dbReference type="InterPro" id="IPR041947">
    <property type="entry name" value="PHD_PHF13"/>
</dbReference>
<dbReference type="InterPro" id="IPR011011">
    <property type="entry name" value="Znf_FYVE_PHD"/>
</dbReference>
<dbReference type="InterPro" id="IPR001965">
    <property type="entry name" value="Znf_PHD"/>
</dbReference>
<dbReference type="InterPro" id="IPR013083">
    <property type="entry name" value="Znf_RING/FYVE/PHD"/>
</dbReference>
<dbReference type="PANTHER" id="PTHR14571">
    <property type="entry name" value="HISTONE-LYSINE N-METHYLTRANSFERASE SET-26-RELATED"/>
    <property type="match status" value="1"/>
</dbReference>
<dbReference type="PANTHER" id="PTHR14571:SF13">
    <property type="entry name" value="PHD FINGER PROTEIN 13"/>
    <property type="match status" value="1"/>
</dbReference>
<dbReference type="Pfam" id="PF20826">
    <property type="entry name" value="PHD_5"/>
    <property type="match status" value="1"/>
</dbReference>
<dbReference type="SMART" id="SM00249">
    <property type="entry name" value="PHD"/>
    <property type="match status" value="1"/>
</dbReference>
<dbReference type="SUPFAM" id="SSF57903">
    <property type="entry name" value="FYVE/PHD zinc finger"/>
    <property type="match status" value="1"/>
</dbReference>
<reference key="1">
    <citation type="journal article" date="2004" name="Nat. Genet.">
        <title>Complete sequencing and characterization of 21,243 full-length human cDNAs.</title>
        <authorList>
            <person name="Ota T."/>
            <person name="Suzuki Y."/>
            <person name="Nishikawa T."/>
            <person name="Otsuki T."/>
            <person name="Sugiyama T."/>
            <person name="Irie R."/>
            <person name="Wakamatsu A."/>
            <person name="Hayashi K."/>
            <person name="Sato H."/>
            <person name="Nagai K."/>
            <person name="Kimura K."/>
            <person name="Makita H."/>
            <person name="Sekine M."/>
            <person name="Obayashi M."/>
            <person name="Nishi T."/>
            <person name="Shibahara T."/>
            <person name="Tanaka T."/>
            <person name="Ishii S."/>
            <person name="Yamamoto J."/>
            <person name="Saito K."/>
            <person name="Kawai Y."/>
            <person name="Isono Y."/>
            <person name="Nakamura Y."/>
            <person name="Nagahari K."/>
            <person name="Murakami K."/>
            <person name="Yasuda T."/>
            <person name="Iwayanagi T."/>
            <person name="Wagatsuma M."/>
            <person name="Shiratori A."/>
            <person name="Sudo H."/>
            <person name="Hosoiri T."/>
            <person name="Kaku Y."/>
            <person name="Kodaira H."/>
            <person name="Kondo H."/>
            <person name="Sugawara M."/>
            <person name="Takahashi M."/>
            <person name="Kanda K."/>
            <person name="Yokoi T."/>
            <person name="Furuya T."/>
            <person name="Kikkawa E."/>
            <person name="Omura Y."/>
            <person name="Abe K."/>
            <person name="Kamihara K."/>
            <person name="Katsuta N."/>
            <person name="Sato K."/>
            <person name="Tanikawa M."/>
            <person name="Yamazaki M."/>
            <person name="Ninomiya K."/>
            <person name="Ishibashi T."/>
            <person name="Yamashita H."/>
            <person name="Murakawa K."/>
            <person name="Fujimori K."/>
            <person name="Tanai H."/>
            <person name="Kimata M."/>
            <person name="Watanabe M."/>
            <person name="Hiraoka S."/>
            <person name="Chiba Y."/>
            <person name="Ishida S."/>
            <person name="Ono Y."/>
            <person name="Takiguchi S."/>
            <person name="Watanabe S."/>
            <person name="Yosida M."/>
            <person name="Hotuta T."/>
            <person name="Kusano J."/>
            <person name="Kanehori K."/>
            <person name="Takahashi-Fujii A."/>
            <person name="Hara H."/>
            <person name="Tanase T.-O."/>
            <person name="Nomura Y."/>
            <person name="Togiya S."/>
            <person name="Komai F."/>
            <person name="Hara R."/>
            <person name="Takeuchi K."/>
            <person name="Arita M."/>
            <person name="Imose N."/>
            <person name="Musashino K."/>
            <person name="Yuuki H."/>
            <person name="Oshima A."/>
            <person name="Sasaki N."/>
            <person name="Aotsuka S."/>
            <person name="Yoshikawa Y."/>
            <person name="Matsunawa H."/>
            <person name="Ichihara T."/>
            <person name="Shiohata N."/>
            <person name="Sano S."/>
            <person name="Moriya S."/>
            <person name="Momiyama H."/>
            <person name="Satoh N."/>
            <person name="Takami S."/>
            <person name="Terashima Y."/>
            <person name="Suzuki O."/>
            <person name="Nakagawa S."/>
            <person name="Senoh A."/>
            <person name="Mizoguchi H."/>
            <person name="Goto Y."/>
            <person name="Shimizu F."/>
            <person name="Wakebe H."/>
            <person name="Hishigaki H."/>
            <person name="Watanabe T."/>
            <person name="Sugiyama A."/>
            <person name="Takemoto M."/>
            <person name="Kawakami B."/>
            <person name="Yamazaki M."/>
            <person name="Watanabe K."/>
            <person name="Kumagai A."/>
            <person name="Itakura S."/>
            <person name="Fukuzumi Y."/>
            <person name="Fujimori Y."/>
            <person name="Komiyama M."/>
            <person name="Tashiro H."/>
            <person name="Tanigami A."/>
            <person name="Fujiwara T."/>
            <person name="Ono T."/>
            <person name="Yamada K."/>
            <person name="Fujii Y."/>
            <person name="Ozaki K."/>
            <person name="Hirao M."/>
            <person name="Ohmori Y."/>
            <person name="Kawabata A."/>
            <person name="Hikiji T."/>
            <person name="Kobatake N."/>
            <person name="Inagaki H."/>
            <person name="Ikema Y."/>
            <person name="Okamoto S."/>
            <person name="Okitani R."/>
            <person name="Kawakami T."/>
            <person name="Noguchi S."/>
            <person name="Itoh T."/>
            <person name="Shigeta K."/>
            <person name="Senba T."/>
            <person name="Matsumura K."/>
            <person name="Nakajima Y."/>
            <person name="Mizuno T."/>
            <person name="Morinaga M."/>
            <person name="Sasaki M."/>
            <person name="Togashi T."/>
            <person name="Oyama M."/>
            <person name="Hata H."/>
            <person name="Watanabe M."/>
            <person name="Komatsu T."/>
            <person name="Mizushima-Sugano J."/>
            <person name="Satoh T."/>
            <person name="Shirai Y."/>
            <person name="Takahashi Y."/>
            <person name="Nakagawa K."/>
            <person name="Okumura K."/>
            <person name="Nagase T."/>
            <person name="Nomura N."/>
            <person name="Kikuchi H."/>
            <person name="Masuho Y."/>
            <person name="Yamashita R."/>
            <person name="Nakai K."/>
            <person name="Yada T."/>
            <person name="Nakamura Y."/>
            <person name="Ohara O."/>
            <person name="Isogai T."/>
            <person name="Sugano S."/>
        </authorList>
    </citation>
    <scope>NUCLEOTIDE SEQUENCE [LARGE SCALE MRNA]</scope>
    <source>
        <tissue>Testis</tissue>
    </source>
</reference>
<reference key="2">
    <citation type="submission" date="2005-03" db="EMBL/GenBank/DDBJ databases">
        <title>Homo sapiens protein coding cDNA.</title>
        <authorList>
            <person name="Totoki Y."/>
            <person name="Toyoda A."/>
            <person name="Takeda T."/>
            <person name="Sakaki Y."/>
            <person name="Tanaka A."/>
            <person name="Yokoyama S."/>
            <person name="Ohara O."/>
            <person name="Nagase T."/>
            <person name="Kikuno R.F."/>
        </authorList>
    </citation>
    <scope>NUCLEOTIDE SEQUENCE [LARGE SCALE MRNA]</scope>
    <source>
        <tissue>Brain</tissue>
    </source>
</reference>
<reference key="3">
    <citation type="journal article" date="2006" name="Nature">
        <title>The DNA sequence and biological annotation of human chromosome 1.</title>
        <authorList>
            <person name="Gregory S.G."/>
            <person name="Barlow K.F."/>
            <person name="McLay K.E."/>
            <person name="Kaul R."/>
            <person name="Swarbreck D."/>
            <person name="Dunham A."/>
            <person name="Scott C.E."/>
            <person name="Howe K.L."/>
            <person name="Woodfine K."/>
            <person name="Spencer C.C.A."/>
            <person name="Jones M.C."/>
            <person name="Gillson C."/>
            <person name="Searle S."/>
            <person name="Zhou Y."/>
            <person name="Kokocinski F."/>
            <person name="McDonald L."/>
            <person name="Evans R."/>
            <person name="Phillips K."/>
            <person name="Atkinson A."/>
            <person name="Cooper R."/>
            <person name="Jones C."/>
            <person name="Hall R.E."/>
            <person name="Andrews T.D."/>
            <person name="Lloyd C."/>
            <person name="Ainscough R."/>
            <person name="Almeida J.P."/>
            <person name="Ambrose K.D."/>
            <person name="Anderson F."/>
            <person name="Andrew R.W."/>
            <person name="Ashwell R.I.S."/>
            <person name="Aubin K."/>
            <person name="Babbage A.K."/>
            <person name="Bagguley C.L."/>
            <person name="Bailey J."/>
            <person name="Beasley H."/>
            <person name="Bethel G."/>
            <person name="Bird C.P."/>
            <person name="Bray-Allen S."/>
            <person name="Brown J.Y."/>
            <person name="Brown A.J."/>
            <person name="Buckley D."/>
            <person name="Burton J."/>
            <person name="Bye J."/>
            <person name="Carder C."/>
            <person name="Chapman J.C."/>
            <person name="Clark S.Y."/>
            <person name="Clarke G."/>
            <person name="Clee C."/>
            <person name="Cobley V."/>
            <person name="Collier R.E."/>
            <person name="Corby N."/>
            <person name="Coville G.J."/>
            <person name="Davies J."/>
            <person name="Deadman R."/>
            <person name="Dunn M."/>
            <person name="Earthrowl M."/>
            <person name="Ellington A.G."/>
            <person name="Errington H."/>
            <person name="Frankish A."/>
            <person name="Frankland J."/>
            <person name="French L."/>
            <person name="Garner P."/>
            <person name="Garnett J."/>
            <person name="Gay L."/>
            <person name="Ghori M.R.J."/>
            <person name="Gibson R."/>
            <person name="Gilby L.M."/>
            <person name="Gillett W."/>
            <person name="Glithero R.J."/>
            <person name="Grafham D.V."/>
            <person name="Griffiths C."/>
            <person name="Griffiths-Jones S."/>
            <person name="Grocock R."/>
            <person name="Hammond S."/>
            <person name="Harrison E.S.I."/>
            <person name="Hart E."/>
            <person name="Haugen E."/>
            <person name="Heath P.D."/>
            <person name="Holmes S."/>
            <person name="Holt K."/>
            <person name="Howden P.J."/>
            <person name="Hunt A.R."/>
            <person name="Hunt S.E."/>
            <person name="Hunter G."/>
            <person name="Isherwood J."/>
            <person name="James R."/>
            <person name="Johnson C."/>
            <person name="Johnson D."/>
            <person name="Joy A."/>
            <person name="Kay M."/>
            <person name="Kershaw J.K."/>
            <person name="Kibukawa M."/>
            <person name="Kimberley A.M."/>
            <person name="King A."/>
            <person name="Knights A.J."/>
            <person name="Lad H."/>
            <person name="Laird G."/>
            <person name="Lawlor S."/>
            <person name="Leongamornlert D.A."/>
            <person name="Lloyd D.M."/>
            <person name="Loveland J."/>
            <person name="Lovell J."/>
            <person name="Lush M.J."/>
            <person name="Lyne R."/>
            <person name="Martin S."/>
            <person name="Mashreghi-Mohammadi M."/>
            <person name="Matthews L."/>
            <person name="Matthews N.S.W."/>
            <person name="McLaren S."/>
            <person name="Milne S."/>
            <person name="Mistry S."/>
            <person name="Moore M.J.F."/>
            <person name="Nickerson T."/>
            <person name="O'Dell C.N."/>
            <person name="Oliver K."/>
            <person name="Palmeiri A."/>
            <person name="Palmer S.A."/>
            <person name="Parker A."/>
            <person name="Patel D."/>
            <person name="Pearce A.V."/>
            <person name="Peck A.I."/>
            <person name="Pelan S."/>
            <person name="Phelps K."/>
            <person name="Phillimore B.J."/>
            <person name="Plumb R."/>
            <person name="Rajan J."/>
            <person name="Raymond C."/>
            <person name="Rouse G."/>
            <person name="Saenphimmachak C."/>
            <person name="Sehra H.K."/>
            <person name="Sheridan E."/>
            <person name="Shownkeen R."/>
            <person name="Sims S."/>
            <person name="Skuce C.D."/>
            <person name="Smith M."/>
            <person name="Steward C."/>
            <person name="Subramanian S."/>
            <person name="Sycamore N."/>
            <person name="Tracey A."/>
            <person name="Tromans A."/>
            <person name="Van Helmond Z."/>
            <person name="Wall M."/>
            <person name="Wallis J.M."/>
            <person name="White S."/>
            <person name="Whitehead S.L."/>
            <person name="Wilkinson J.E."/>
            <person name="Willey D.L."/>
            <person name="Williams H."/>
            <person name="Wilming L."/>
            <person name="Wray P.W."/>
            <person name="Wu Z."/>
            <person name="Coulson A."/>
            <person name="Vaudin M."/>
            <person name="Sulston J.E."/>
            <person name="Durbin R.M."/>
            <person name="Hubbard T."/>
            <person name="Wooster R."/>
            <person name="Dunham I."/>
            <person name="Carter N.P."/>
            <person name="McVean G."/>
            <person name="Ross M.T."/>
            <person name="Harrow J."/>
            <person name="Olson M.V."/>
            <person name="Beck S."/>
            <person name="Rogers J."/>
            <person name="Bentley D.R."/>
        </authorList>
    </citation>
    <scope>NUCLEOTIDE SEQUENCE [LARGE SCALE GENOMIC DNA]</scope>
</reference>
<reference key="4">
    <citation type="submission" date="2005-07" db="EMBL/GenBank/DDBJ databases">
        <authorList>
            <person name="Mural R.J."/>
            <person name="Istrail S."/>
            <person name="Sutton G.G."/>
            <person name="Florea L."/>
            <person name="Halpern A.L."/>
            <person name="Mobarry C.M."/>
            <person name="Lippert R."/>
            <person name="Walenz B."/>
            <person name="Shatkay H."/>
            <person name="Dew I."/>
            <person name="Miller J.R."/>
            <person name="Flanigan M.J."/>
            <person name="Edwards N.J."/>
            <person name="Bolanos R."/>
            <person name="Fasulo D."/>
            <person name="Halldorsson B.V."/>
            <person name="Hannenhalli S."/>
            <person name="Turner R."/>
            <person name="Yooseph S."/>
            <person name="Lu F."/>
            <person name="Nusskern D.R."/>
            <person name="Shue B.C."/>
            <person name="Zheng X.H."/>
            <person name="Zhong F."/>
            <person name="Delcher A.L."/>
            <person name="Huson D.H."/>
            <person name="Kravitz S.A."/>
            <person name="Mouchard L."/>
            <person name="Reinert K."/>
            <person name="Remington K.A."/>
            <person name="Clark A.G."/>
            <person name="Waterman M.S."/>
            <person name="Eichler E.E."/>
            <person name="Adams M.D."/>
            <person name="Hunkapiller M.W."/>
            <person name="Myers E.W."/>
            <person name="Venter J.C."/>
        </authorList>
    </citation>
    <scope>NUCLEOTIDE SEQUENCE [LARGE SCALE GENOMIC DNA]</scope>
</reference>
<reference key="5">
    <citation type="journal article" date="2004" name="Genome Res.">
        <title>The status, quality, and expansion of the NIH full-length cDNA project: the Mammalian Gene Collection (MGC).</title>
        <authorList>
            <consortium name="The MGC Project Team"/>
        </authorList>
    </citation>
    <scope>NUCLEOTIDE SEQUENCE [LARGE SCALE MRNA]</scope>
    <scope>VARIANT GLU-20</scope>
    <source>
        <tissue>Lung</tissue>
        <tissue>Testis</tissue>
    </source>
</reference>
<reference key="6">
    <citation type="submission" date="1999-10" db="EMBL/GenBank/DDBJ databases">
        <authorList>
            <person name="Rhodes S."/>
            <person name="Huckle E."/>
        </authorList>
    </citation>
    <scope>NUCLEOTIDE SEQUENCE [LARGE SCALE MRNA] OF 48-300</scope>
</reference>
<reference key="7">
    <citation type="journal article" date="2009" name="J. Cell Sci.">
        <title>SPOC1: a novel PHD-containing protein modulating chromatin structure and mitotic chromosome condensation.</title>
        <authorList>
            <person name="Kinkley S."/>
            <person name="Staege H."/>
            <person name="Mohrmann G."/>
            <person name="Rohaly G."/>
            <person name="Schaub T."/>
            <person name="Kremmer E."/>
            <person name="Winterpacht A."/>
            <person name="Will H."/>
        </authorList>
    </citation>
    <scope>FUNCTION</scope>
    <scope>SUBCELLULAR LOCATION</scope>
    <scope>INTERACTION WITH GSK3B</scope>
    <scope>PROTEASOMAL DEGRADATION</scope>
    <scope>INDUCTION</scope>
</reference>
<reference key="8">
    <citation type="journal article" date="2012" name="Nucleic Acids Res.">
        <title>SPOC1 modulates DNA repair by regulating key determinants of chromatin compaction and DNA damage response.</title>
        <authorList>
            <person name="Mund A."/>
            <person name="Schubert T."/>
            <person name="Staege H."/>
            <person name="Kinkley S."/>
            <person name="Reumann K."/>
            <person name="Kriegs M."/>
            <person name="Fritsch L."/>
            <person name="Battisti V."/>
            <person name="Ait-Si-Ali S."/>
            <person name="Hoffbeck A.S."/>
            <person name="Soutoglou E."/>
            <person name="Will H."/>
        </authorList>
    </citation>
    <scope>FUNCTION</scope>
    <scope>SUBCELLULAR LOCATION</scope>
    <scope>INTERACTION WITH TRIM28 AND SETDB1</scope>
    <scope>INTERACTION WITH TRIMETHYLATED HISTONE H3</scope>
</reference>
<reference key="9">
    <citation type="journal article" date="2020" name="Nucleic Acids Res.">
        <title>SPOC1 modulates DNA repair by regulating key determinants of chromatin compaction and DNA damage response.</title>
        <authorList>
            <person name="Mund A."/>
            <person name="Schubert T."/>
            <person name="Staege H."/>
            <person name="Kinkley S."/>
            <person name="Reumann K."/>
            <person name="Kriegs M."/>
            <person name="Fritsch L."/>
            <person name="Battisti V."/>
            <person name="Ait-Si-Ali S."/>
            <person name="Hoffbeck A.S."/>
            <person name="Soutoglou E."/>
            <person name="Will H."/>
        </authorList>
    </citation>
    <scope>ERRATUM OF PUBMED:23034801</scope>
</reference>
<reference key="10">
    <citation type="submission" date="2010-09" db="PDB data bank">
        <title>Crystal structure of PHF13 in complex with tri-methylated histone H3K4.</title>
        <authorList>
            <consortium name="Structural genomics consortium (SGC)"/>
        </authorList>
    </citation>
    <scope>X-RAY CRYSTALLOGRAPHY (1.67 ANGSTROMS) OF 250-300 IN COMPLEX WITH TRIMETHYLATED HISTONE H3 AND ZINC IONS</scope>
    <scope>X-RAY CRYSTALLOGRAPHY (1.85 ANGSTROMS) OF 232-281</scope>
</reference>
<organism>
    <name type="scientific">Homo sapiens</name>
    <name type="common">Human</name>
    <dbReference type="NCBI Taxonomy" id="9606"/>
    <lineage>
        <taxon>Eukaryota</taxon>
        <taxon>Metazoa</taxon>
        <taxon>Chordata</taxon>
        <taxon>Craniata</taxon>
        <taxon>Vertebrata</taxon>
        <taxon>Euteleostomi</taxon>
        <taxon>Mammalia</taxon>
        <taxon>Eutheria</taxon>
        <taxon>Euarchontoglires</taxon>
        <taxon>Primates</taxon>
        <taxon>Haplorrhini</taxon>
        <taxon>Catarrhini</taxon>
        <taxon>Hominidae</taxon>
        <taxon>Homo</taxon>
    </lineage>
</organism>
<protein>
    <recommendedName>
        <fullName>PHD finger protein 13</fullName>
    </recommendedName>
    <alternativeName>
        <fullName>Survival time-associated PHD finger protein in ovarian cancer 1</fullName>
        <shortName>SPOC1</shortName>
    </alternativeName>
</protein>
<name>PHF13_HUMAN</name>
<evidence type="ECO:0000250" key="1">
    <source>
        <dbReference type="UniProtKB" id="Q8K2W6"/>
    </source>
</evidence>
<evidence type="ECO:0000256" key="2">
    <source>
        <dbReference type="SAM" id="MobiDB-lite"/>
    </source>
</evidence>
<evidence type="ECO:0000269" key="3">
    <source>
    </source>
</evidence>
<evidence type="ECO:0000269" key="4">
    <source>
    </source>
</evidence>
<evidence type="ECO:0000269" key="5">
    <source>
    </source>
</evidence>
<evidence type="ECO:0000269" key="6">
    <source ref="10"/>
</evidence>
<evidence type="ECO:0000305" key="7"/>
<evidence type="ECO:0000312" key="8">
    <source>
        <dbReference type="HGNC" id="HGNC:22983"/>
    </source>
</evidence>
<evidence type="ECO:0007744" key="9">
    <source>
        <dbReference type="PDB" id="3O7A"/>
    </source>
</evidence>
<evidence type="ECO:0007829" key="10">
    <source>
        <dbReference type="PDB" id="3O7A"/>
    </source>
</evidence>
<comment type="function">
    <text evidence="1 4 5">Modulates chromatin structure and DNA damage response by regulating key determinants of chromatin compaction and DNA damage response (PubMed:19638409). Binds H3K4me3-containing chromatin and promotes DNA condensation by recruiting corepressors such as TRIM28 and H3K9 methyltransferase SETDB1 (PubMed:23034801). Required for normal chromosome condensation during the early stages of mitosis. Required for normal chromosome separation during mitosis (PubMed:19638409). Increases both chromatin-associated levels and activity of H3K9 methyltransferases, such as SETDB1, thus enhancing H3K9 trimethylation (PubMed:23034801). Essential for testicular stem-cell differentiation and sustained spermatogenesis (By similarity).</text>
</comment>
<comment type="subunit">
    <text evidence="4 5 6">Interacts with histone H3 that is trimethylated at 'Lys-4' (H3K4me3) (PubMed:23034801, Ref.10). Interacts with GSK3B (PubMed:19638409). Interacts with TRIM28 (PubMed:23034801). Interacts with SETDB1; the interaction probably enhances SETDB1 chromatin-associated levels and activity (PubMed:23034801).</text>
</comment>
<comment type="subcellular location">
    <subcellularLocation>
        <location evidence="4 5">Nucleus</location>
    </subcellularLocation>
    <subcellularLocation>
        <location evidence="4">Nucleus</location>
        <location evidence="4">Nucleoplasm</location>
    </subcellularLocation>
    <text>Predominantly bound to chromatin, but a minor proportion is also detected in the nucleoplasm.</text>
</comment>
<comment type="induction">
    <text evidence="4">Expression levels are tightly regulated during the cell cycle. Strongly up-regulated during late G2 phase and M phase of the mitotic cell cycle. Down-regulated at the G1-S phase transition of the cell cycle.</text>
</comment>
<comment type="PTM">
    <text evidence="4">Subject to proteasomal degradation. Stable when bound to chromatin. The soluble form is rapidly degraded.</text>
</comment>
<comment type="sequence caution" evidence="7">
    <conflict type="erroneous initiation">
        <sequence resource="EMBL-CDS" id="AAH32792"/>
    </conflict>
    <text>Extended N-terminus.</text>
</comment>
<comment type="sequence caution" evidence="7">
    <conflict type="erroneous initiation">
        <sequence resource="EMBL-CDS" id="BAD92781"/>
    </conflict>
    <text>Extended N-terminus.</text>
</comment>
<proteinExistence type="evidence at protein level"/>